<feature type="signal peptide" evidence="1">
    <location>
        <begin position="1"/>
        <end position="22"/>
    </location>
</feature>
<feature type="chain" id="PRO_0000447960" description="Secreted RxLR effector protein 123">
    <location>
        <begin position="23"/>
        <end position="96"/>
    </location>
</feature>
<feature type="region of interest" description="Disordered" evidence="2">
    <location>
        <begin position="57"/>
        <end position="96"/>
    </location>
</feature>
<feature type="short sequence motif" description="RxLR-dEER" evidence="6">
    <location>
        <begin position="49"/>
        <end position="70"/>
    </location>
</feature>
<feature type="compositionally biased region" description="Polar residues" evidence="2">
    <location>
        <begin position="87"/>
        <end position="96"/>
    </location>
</feature>
<organism>
    <name type="scientific">Plasmopara viticola</name>
    <name type="common">Downy mildew of grapevine</name>
    <name type="synonym">Botrytis viticola</name>
    <dbReference type="NCBI Taxonomy" id="143451"/>
    <lineage>
        <taxon>Eukaryota</taxon>
        <taxon>Sar</taxon>
        <taxon>Stramenopiles</taxon>
        <taxon>Oomycota</taxon>
        <taxon>Peronosporales</taxon>
        <taxon>Peronosporaceae</taxon>
        <taxon>Plasmopara</taxon>
    </lineage>
</organism>
<reference key="1">
    <citation type="journal article" date="2018" name="Front. Plant Sci.">
        <title>In planta functional analysis and subcellular localization of the oomycete pathogen Plasmopara viticola candidate RXLR effector repertoire.</title>
        <authorList>
            <person name="Liu Y."/>
            <person name="Lan X."/>
            <person name="Song S."/>
            <person name="Yin L."/>
            <person name="Dry I.B."/>
            <person name="Qu J."/>
            <person name="Xiang J."/>
            <person name="Lu J."/>
        </authorList>
    </citation>
    <scope>NUCLEOTIDE SEQUENCE [MRNA]</scope>
    <scope>DOMAIN</scope>
    <scope>FUNCTION</scope>
    <scope>SUBCELLULAR LOCATION</scope>
</reference>
<proteinExistence type="inferred from homology"/>
<name>RL123_PLAVT</name>
<keyword id="KW-1035">Host cytoplasm</keyword>
<keyword id="KW-1048">Host nucleus</keyword>
<keyword id="KW-0964">Secreted</keyword>
<keyword id="KW-0732">Signal</keyword>
<keyword id="KW-0843">Virulence</keyword>
<evidence type="ECO:0000255" key="1"/>
<evidence type="ECO:0000256" key="2">
    <source>
        <dbReference type="SAM" id="MobiDB-lite"/>
    </source>
</evidence>
<evidence type="ECO:0000269" key="3">
    <source>
    </source>
</evidence>
<evidence type="ECO:0000303" key="4">
    <source>
    </source>
</evidence>
<evidence type="ECO:0000305" key="5"/>
<evidence type="ECO:0000305" key="6">
    <source>
    </source>
</evidence>
<protein>
    <recommendedName>
        <fullName evidence="4">Secreted RxLR effector protein 123</fullName>
    </recommendedName>
</protein>
<sequence>MVGAYYVGIALLVAGGSQTAAGVDQYDLEQTPDNGFSRLLALDEMLRSRFLRKSRNPKDNLMLSEANEERTPSSPSNSLTEFIVSEPITTNVMRTE</sequence>
<dbReference type="SMR" id="P0CV51"/>
<dbReference type="GO" id="GO:0005576">
    <property type="term" value="C:extracellular region"/>
    <property type="evidence" value="ECO:0007669"/>
    <property type="project" value="UniProtKB-SubCell"/>
</dbReference>
<dbReference type="GO" id="GO:0030430">
    <property type="term" value="C:host cell cytoplasm"/>
    <property type="evidence" value="ECO:0007669"/>
    <property type="project" value="UniProtKB-SubCell"/>
</dbReference>
<dbReference type="GO" id="GO:0042025">
    <property type="term" value="C:host cell nucleus"/>
    <property type="evidence" value="ECO:0007669"/>
    <property type="project" value="UniProtKB-SubCell"/>
</dbReference>
<comment type="function">
    <text evidence="3">Secreted effector that dos not suppress the host cell death induced by cell death-inducing proteins.</text>
</comment>
<comment type="subcellular location">
    <subcellularLocation>
        <location evidence="3">Secreted</location>
    </subcellularLocation>
    <subcellularLocation>
        <location evidence="3">Host nucleus</location>
    </subcellularLocation>
    <subcellularLocation>
        <location evidence="3">Host cytoplasm</location>
    </subcellularLocation>
</comment>
<comment type="domain">
    <text evidence="6">The RxLR-dEER motif acts to carry the protein into the host cell cytoplasm through binding to cell surface phosphatidylinositol-3-phosphate.</text>
</comment>
<comment type="similarity">
    <text evidence="5">Belongs to the RxLR effector family.</text>
</comment>
<accession>P0CV51</accession>
<gene>
    <name evidence="4" type="primary">RXLR123</name>
</gene>